<keyword id="KW-0025">Alternative splicing</keyword>
<keyword id="KW-0378">Hydrolase</keyword>
<keyword id="KW-0645">Protease</keyword>
<keyword id="KW-1185">Reference proteome</keyword>
<keyword id="KW-0888">Threonine protease</keyword>
<keyword id="KW-0865">Zymogen</keyword>
<dbReference type="EC" id="3.4.25.-"/>
<dbReference type="EMBL" id="AK036512">
    <property type="protein sequence ID" value="BAC29457.1"/>
    <property type="molecule type" value="mRNA"/>
</dbReference>
<dbReference type="EMBL" id="AK050603">
    <property type="protein sequence ID" value="BAC34335.1"/>
    <property type="molecule type" value="mRNA"/>
</dbReference>
<dbReference type="EMBL" id="BC005776">
    <property type="protein sequence ID" value="AAH05776.1"/>
    <property type="status" value="ALT_INIT"/>
    <property type="molecule type" value="mRNA"/>
</dbReference>
<dbReference type="EMBL" id="BC024597">
    <property type="protein sequence ID" value="AAH24597.1"/>
    <property type="molecule type" value="mRNA"/>
</dbReference>
<dbReference type="CCDS" id="CCDS16802.1">
    <molecule id="Q8R1G1-1"/>
</dbReference>
<dbReference type="RefSeq" id="NP_001153112.1">
    <molecule id="Q8R1G1-1"/>
    <property type="nucleotide sequence ID" value="NM_001159640.2"/>
</dbReference>
<dbReference type="RefSeq" id="NP_001153113.1">
    <property type="nucleotide sequence ID" value="NM_001159641.2"/>
</dbReference>
<dbReference type="RefSeq" id="NP_001276540.1">
    <property type="nucleotide sequence ID" value="NM_001289611.1"/>
</dbReference>
<dbReference type="RefSeq" id="NP_780434.1">
    <molecule id="Q8R1G1-1"/>
    <property type="nucleotide sequence ID" value="NM_175225.5"/>
</dbReference>
<dbReference type="RefSeq" id="XP_030108032.1">
    <molecule id="Q8R1G1-1"/>
    <property type="nucleotide sequence ID" value="XM_030252172.2"/>
</dbReference>
<dbReference type="SMR" id="Q8R1G1"/>
<dbReference type="FunCoup" id="Q8R1G1">
    <property type="interactions" value="2192"/>
</dbReference>
<dbReference type="STRING" id="10090.ENSMUSP00000039546"/>
<dbReference type="MEROPS" id="T02.004"/>
<dbReference type="iPTMnet" id="Q8R1G1"/>
<dbReference type="PhosphoSitePlus" id="Q8R1G1"/>
<dbReference type="PaxDb" id="10090-ENSMUSP00000039546"/>
<dbReference type="PeptideAtlas" id="Q8R1G1"/>
<dbReference type="ProteomicsDB" id="263208">
    <molecule id="Q8R1G1-1"/>
</dbReference>
<dbReference type="ProteomicsDB" id="263209">
    <molecule id="Q8R1G1-2"/>
</dbReference>
<dbReference type="Antibodypedia" id="24250">
    <property type="antibodies" value="197 antibodies from 24 providers"/>
</dbReference>
<dbReference type="DNASU" id="75812"/>
<dbReference type="Ensembl" id="ENSMUST00000046656.9">
    <molecule id="Q8R1G1-1"/>
    <property type="protein sequence ID" value="ENSMUSP00000039546.3"/>
    <property type="gene ID" value="ENSMUSG00000039033.12"/>
</dbReference>
<dbReference type="Ensembl" id="ENSMUST00000110079.9">
    <molecule id="Q8R1G1-1"/>
    <property type="protein sequence ID" value="ENSMUSP00000105706.3"/>
    <property type="gene ID" value="ENSMUSG00000039033.12"/>
</dbReference>
<dbReference type="GeneID" id="75812"/>
<dbReference type="KEGG" id="mmu:75812"/>
<dbReference type="UCSC" id="uc008mpg.3">
    <molecule id="Q8R1G1-1"/>
    <property type="organism name" value="mouse"/>
</dbReference>
<dbReference type="UCSC" id="uc008mpm.2">
    <molecule id="Q8R1G1-2"/>
    <property type="organism name" value="mouse"/>
</dbReference>
<dbReference type="AGR" id="MGI:1923062"/>
<dbReference type="CTD" id="55617"/>
<dbReference type="MGI" id="MGI:1923062">
    <property type="gene designation" value="Tasp1"/>
</dbReference>
<dbReference type="VEuPathDB" id="HostDB:ENSMUSG00000039033"/>
<dbReference type="eggNOG" id="KOG1592">
    <property type="taxonomic scope" value="Eukaryota"/>
</dbReference>
<dbReference type="GeneTree" id="ENSGT00950000183045"/>
<dbReference type="InParanoid" id="Q8R1G1"/>
<dbReference type="OMA" id="RLWCAFT"/>
<dbReference type="OrthoDB" id="77601at2759"/>
<dbReference type="PhylomeDB" id="Q8R1G1"/>
<dbReference type="TreeFam" id="TF106358"/>
<dbReference type="Reactome" id="R-MMU-9772755">
    <property type="pathway name" value="Formation of WDR5-containing histone-modifying complexes"/>
</dbReference>
<dbReference type="BioGRID-ORCS" id="75812">
    <property type="hits" value="5 hits in 79 CRISPR screens"/>
</dbReference>
<dbReference type="ChiTaRS" id="Tasp1">
    <property type="organism name" value="mouse"/>
</dbReference>
<dbReference type="PRO" id="PR:Q8R1G1"/>
<dbReference type="Proteomes" id="UP000000589">
    <property type="component" value="Chromosome 2"/>
</dbReference>
<dbReference type="RNAct" id="Q8R1G1">
    <property type="molecule type" value="protein"/>
</dbReference>
<dbReference type="Bgee" id="ENSMUSG00000039033">
    <property type="expression patterns" value="Expressed in spermatid and 244 other cell types or tissues"/>
</dbReference>
<dbReference type="ExpressionAtlas" id="Q8R1G1">
    <property type="expression patterns" value="baseline and differential"/>
</dbReference>
<dbReference type="GO" id="GO:0005829">
    <property type="term" value="C:cytosol"/>
    <property type="evidence" value="ECO:0000304"/>
    <property type="project" value="Reactome"/>
</dbReference>
<dbReference type="GO" id="GO:0042802">
    <property type="term" value="F:identical protein binding"/>
    <property type="evidence" value="ECO:0007669"/>
    <property type="project" value="Ensembl"/>
</dbReference>
<dbReference type="GO" id="GO:0004298">
    <property type="term" value="F:threonine-type endopeptidase activity"/>
    <property type="evidence" value="ECO:0000250"/>
    <property type="project" value="UniProtKB"/>
</dbReference>
<dbReference type="GO" id="GO:0045893">
    <property type="term" value="P:positive regulation of DNA-templated transcription"/>
    <property type="evidence" value="ECO:0000250"/>
    <property type="project" value="UniProtKB"/>
</dbReference>
<dbReference type="GO" id="GO:0006508">
    <property type="term" value="P:proteolysis"/>
    <property type="evidence" value="ECO:0007669"/>
    <property type="project" value="UniProtKB-KW"/>
</dbReference>
<dbReference type="CDD" id="cd04514">
    <property type="entry name" value="Taspase1_like"/>
    <property type="match status" value="1"/>
</dbReference>
<dbReference type="FunFam" id="3.60.20.30:FF:000002">
    <property type="entry name" value="Taspase, threonine aspartase, 1"/>
    <property type="match status" value="1"/>
</dbReference>
<dbReference type="Gene3D" id="3.60.20.30">
    <property type="entry name" value="(Glycosyl)asparaginase"/>
    <property type="match status" value="1"/>
</dbReference>
<dbReference type="InterPro" id="IPR029055">
    <property type="entry name" value="Ntn_hydrolases_N"/>
</dbReference>
<dbReference type="InterPro" id="IPR000246">
    <property type="entry name" value="Peptidase_T2"/>
</dbReference>
<dbReference type="InterPro" id="IPR037464">
    <property type="entry name" value="Taspase1"/>
</dbReference>
<dbReference type="PANTHER" id="PTHR10188">
    <property type="entry name" value="L-ASPARAGINASE"/>
    <property type="match status" value="1"/>
</dbReference>
<dbReference type="PANTHER" id="PTHR10188:SF8">
    <property type="entry name" value="THREONINE ASPARTASE 1"/>
    <property type="match status" value="1"/>
</dbReference>
<dbReference type="Pfam" id="PF01112">
    <property type="entry name" value="Asparaginase_2"/>
    <property type="match status" value="1"/>
</dbReference>
<dbReference type="SUPFAM" id="SSF56235">
    <property type="entry name" value="N-terminal nucleophile aminohydrolases (Ntn hydrolases)"/>
    <property type="match status" value="1"/>
</dbReference>
<comment type="function">
    <text evidence="2 4">Protease responsible for KMT2A/MLL1 and KMT2D/MLL2 processing and activation (PubMed:16951254). Through substrate activation, it controls the expression of HOXA genes, and the expression of key cell cycle regulators including CCNA1, CCNB1, CCNE1 and CDKN2A (PubMed:16951254).</text>
</comment>
<comment type="subunit">
    <text evidence="2">Intramolecular proteolysis generates 2 subunits, alpha and beta, which reassemble through a non-covalent association to form the fully active enzyme.</text>
</comment>
<comment type="alternative products">
    <event type="alternative splicing"/>
    <isoform>
        <id>Q8R1G1-1</id>
        <name>1</name>
        <sequence type="displayed"/>
    </isoform>
    <isoform>
        <id>Q8R1G1-2</id>
        <name>2</name>
        <sequence type="described" ref="VSP_000334 VSP_000335"/>
    </isoform>
    <text>Additional isoforms seem to exist. Experimental confirmation may be lacking for some isoforms.</text>
</comment>
<comment type="disruption phenotype">
    <text evidence="4">Tasp1-null mice are born with no apparent respiratory distress, but the majority dies at postpartum day 1 or 2 with no obvious milk spots, suggesting a feeding defect. Newborns are smaller in size compared to their wild-type littermates. This phenotype appears in utero. Animals that survive the newborn period are markedly smaller through adulthood, and display skeletal abnormalities.</text>
</comment>
<comment type="similarity">
    <text evidence="6">Belongs to the Ntn-hydrolase family.</text>
</comment>
<comment type="sequence caution" evidence="6">
    <conflict type="erroneous initiation">
        <sequence resource="EMBL-CDS" id="AAH05776"/>
    </conflict>
</comment>
<organism>
    <name type="scientific">Mus musculus</name>
    <name type="common">Mouse</name>
    <dbReference type="NCBI Taxonomy" id="10090"/>
    <lineage>
        <taxon>Eukaryota</taxon>
        <taxon>Metazoa</taxon>
        <taxon>Chordata</taxon>
        <taxon>Craniata</taxon>
        <taxon>Vertebrata</taxon>
        <taxon>Euteleostomi</taxon>
        <taxon>Mammalia</taxon>
        <taxon>Eutheria</taxon>
        <taxon>Euarchontoglires</taxon>
        <taxon>Glires</taxon>
        <taxon>Rodentia</taxon>
        <taxon>Myomorpha</taxon>
        <taxon>Muroidea</taxon>
        <taxon>Muridae</taxon>
        <taxon>Murinae</taxon>
        <taxon>Mus</taxon>
        <taxon>Mus</taxon>
    </lineage>
</organism>
<feature type="chain" id="PRO_0000002352" description="Threonine aspartase subunit alpha" evidence="1">
    <location>
        <begin position="1"/>
        <end position="233"/>
    </location>
</feature>
<feature type="chain" id="PRO_0000002353" description="Threonine aspartase subunit beta" evidence="1">
    <location>
        <begin position="234"/>
        <end position="420"/>
    </location>
</feature>
<feature type="region of interest" description="Disordered" evidence="3">
    <location>
        <begin position="1"/>
        <end position="25"/>
    </location>
</feature>
<feature type="active site" description="Nucleophile" evidence="2">
    <location>
        <position position="234"/>
    </location>
</feature>
<feature type="splice variant" id="VSP_000334" description="In isoform 2." evidence="5">
    <original>ENDSGTLDTVGAVVVDHEGNVAAAVSSG</original>
    <variation>VRRCLKNWLMHGRDVVDLLLEQYCPFEL</variation>
    <location>
        <begin position="226"/>
        <end position="253"/>
    </location>
</feature>
<feature type="splice variant" id="VSP_000335" description="In isoform 2." evidence="5">
    <location>
        <begin position="254"/>
        <end position="420"/>
    </location>
</feature>
<gene>
    <name type="primary">Tasp1</name>
</gene>
<sequence>MIMEKGMNSGEGLPSRSSQASAAKVTVKELETQQPCKEKRGGFVLVHAGAGYHSESKAKEYKHVCKRACQKAIEKLQAGALATDAVAAALVELEDSPFTNAGIGSNLNLLGEIECDASIMDGKSLNFGAVGALSGIKNPVSVAHRLLCEGQKGKLSAGRIPPCFLVGEGAYRWAVDHGIPSCPPSTMTTRFSLAAFKRNKRKLELAERVETDFIQLKRRRQSSAKENDSGTLDTVGAVVVDHEGNVAAAVSSGGLALKHPGRVGQAALYGCGCWAENTGAQNPYSTAVSTSGCGEHLVRTILARECSHALQAEDAHQALLETMQNKFISSPFLACEDGVLGGVIVLRSCRCSSESDSSQDKQTLLVEFLWSHTTESMCVGYMSAQDGKAKTHISRLPPGAVAGQSVAIEGGVCRLESPVN</sequence>
<accession>Q8R1G1</accession>
<accession>Q99JP3</accession>
<reference key="1">
    <citation type="journal article" date="2005" name="Science">
        <title>The transcriptional landscape of the mammalian genome.</title>
        <authorList>
            <person name="Carninci P."/>
            <person name="Kasukawa T."/>
            <person name="Katayama S."/>
            <person name="Gough J."/>
            <person name="Frith M.C."/>
            <person name="Maeda N."/>
            <person name="Oyama R."/>
            <person name="Ravasi T."/>
            <person name="Lenhard B."/>
            <person name="Wells C."/>
            <person name="Kodzius R."/>
            <person name="Shimokawa K."/>
            <person name="Bajic V.B."/>
            <person name="Brenner S.E."/>
            <person name="Batalov S."/>
            <person name="Forrest A.R."/>
            <person name="Zavolan M."/>
            <person name="Davis M.J."/>
            <person name="Wilming L.G."/>
            <person name="Aidinis V."/>
            <person name="Allen J.E."/>
            <person name="Ambesi-Impiombato A."/>
            <person name="Apweiler R."/>
            <person name="Aturaliya R.N."/>
            <person name="Bailey T.L."/>
            <person name="Bansal M."/>
            <person name="Baxter L."/>
            <person name="Beisel K.W."/>
            <person name="Bersano T."/>
            <person name="Bono H."/>
            <person name="Chalk A.M."/>
            <person name="Chiu K.P."/>
            <person name="Choudhary V."/>
            <person name="Christoffels A."/>
            <person name="Clutterbuck D.R."/>
            <person name="Crowe M.L."/>
            <person name="Dalla E."/>
            <person name="Dalrymple B.P."/>
            <person name="de Bono B."/>
            <person name="Della Gatta G."/>
            <person name="di Bernardo D."/>
            <person name="Down T."/>
            <person name="Engstrom P."/>
            <person name="Fagiolini M."/>
            <person name="Faulkner G."/>
            <person name="Fletcher C.F."/>
            <person name="Fukushima T."/>
            <person name="Furuno M."/>
            <person name="Futaki S."/>
            <person name="Gariboldi M."/>
            <person name="Georgii-Hemming P."/>
            <person name="Gingeras T.R."/>
            <person name="Gojobori T."/>
            <person name="Green R.E."/>
            <person name="Gustincich S."/>
            <person name="Harbers M."/>
            <person name="Hayashi Y."/>
            <person name="Hensch T.K."/>
            <person name="Hirokawa N."/>
            <person name="Hill D."/>
            <person name="Huminiecki L."/>
            <person name="Iacono M."/>
            <person name="Ikeo K."/>
            <person name="Iwama A."/>
            <person name="Ishikawa T."/>
            <person name="Jakt M."/>
            <person name="Kanapin A."/>
            <person name="Katoh M."/>
            <person name="Kawasawa Y."/>
            <person name="Kelso J."/>
            <person name="Kitamura H."/>
            <person name="Kitano H."/>
            <person name="Kollias G."/>
            <person name="Krishnan S.P."/>
            <person name="Kruger A."/>
            <person name="Kummerfeld S.K."/>
            <person name="Kurochkin I.V."/>
            <person name="Lareau L.F."/>
            <person name="Lazarevic D."/>
            <person name="Lipovich L."/>
            <person name="Liu J."/>
            <person name="Liuni S."/>
            <person name="McWilliam S."/>
            <person name="Madan Babu M."/>
            <person name="Madera M."/>
            <person name="Marchionni L."/>
            <person name="Matsuda H."/>
            <person name="Matsuzawa S."/>
            <person name="Miki H."/>
            <person name="Mignone F."/>
            <person name="Miyake S."/>
            <person name="Morris K."/>
            <person name="Mottagui-Tabar S."/>
            <person name="Mulder N."/>
            <person name="Nakano N."/>
            <person name="Nakauchi H."/>
            <person name="Ng P."/>
            <person name="Nilsson R."/>
            <person name="Nishiguchi S."/>
            <person name="Nishikawa S."/>
            <person name="Nori F."/>
            <person name="Ohara O."/>
            <person name="Okazaki Y."/>
            <person name="Orlando V."/>
            <person name="Pang K.C."/>
            <person name="Pavan W.J."/>
            <person name="Pavesi G."/>
            <person name="Pesole G."/>
            <person name="Petrovsky N."/>
            <person name="Piazza S."/>
            <person name="Reed J."/>
            <person name="Reid J.F."/>
            <person name="Ring B.Z."/>
            <person name="Ringwald M."/>
            <person name="Rost B."/>
            <person name="Ruan Y."/>
            <person name="Salzberg S.L."/>
            <person name="Sandelin A."/>
            <person name="Schneider C."/>
            <person name="Schoenbach C."/>
            <person name="Sekiguchi K."/>
            <person name="Semple C.A."/>
            <person name="Seno S."/>
            <person name="Sessa L."/>
            <person name="Sheng Y."/>
            <person name="Shibata Y."/>
            <person name="Shimada H."/>
            <person name="Shimada K."/>
            <person name="Silva D."/>
            <person name="Sinclair B."/>
            <person name="Sperling S."/>
            <person name="Stupka E."/>
            <person name="Sugiura K."/>
            <person name="Sultana R."/>
            <person name="Takenaka Y."/>
            <person name="Taki K."/>
            <person name="Tammoja K."/>
            <person name="Tan S.L."/>
            <person name="Tang S."/>
            <person name="Taylor M.S."/>
            <person name="Tegner J."/>
            <person name="Teichmann S.A."/>
            <person name="Ueda H.R."/>
            <person name="van Nimwegen E."/>
            <person name="Verardo R."/>
            <person name="Wei C.L."/>
            <person name="Yagi K."/>
            <person name="Yamanishi H."/>
            <person name="Zabarovsky E."/>
            <person name="Zhu S."/>
            <person name="Zimmer A."/>
            <person name="Hide W."/>
            <person name="Bult C."/>
            <person name="Grimmond S.M."/>
            <person name="Teasdale R.D."/>
            <person name="Liu E.T."/>
            <person name="Brusic V."/>
            <person name="Quackenbush J."/>
            <person name="Wahlestedt C."/>
            <person name="Mattick J.S."/>
            <person name="Hume D.A."/>
            <person name="Kai C."/>
            <person name="Sasaki D."/>
            <person name="Tomaru Y."/>
            <person name="Fukuda S."/>
            <person name="Kanamori-Katayama M."/>
            <person name="Suzuki M."/>
            <person name="Aoki J."/>
            <person name="Arakawa T."/>
            <person name="Iida J."/>
            <person name="Imamura K."/>
            <person name="Itoh M."/>
            <person name="Kato T."/>
            <person name="Kawaji H."/>
            <person name="Kawagashira N."/>
            <person name="Kawashima T."/>
            <person name="Kojima M."/>
            <person name="Kondo S."/>
            <person name="Konno H."/>
            <person name="Nakano K."/>
            <person name="Ninomiya N."/>
            <person name="Nishio T."/>
            <person name="Okada M."/>
            <person name="Plessy C."/>
            <person name="Shibata K."/>
            <person name="Shiraki T."/>
            <person name="Suzuki S."/>
            <person name="Tagami M."/>
            <person name="Waki K."/>
            <person name="Watahiki A."/>
            <person name="Okamura-Oho Y."/>
            <person name="Suzuki H."/>
            <person name="Kawai J."/>
            <person name="Hayashizaki Y."/>
        </authorList>
    </citation>
    <scope>NUCLEOTIDE SEQUENCE [LARGE SCALE MRNA] (ISOFORM 1)</scope>
    <source>
        <strain>C57BL/6J</strain>
        <tissue>Bone</tissue>
        <tissue>Thymus</tissue>
    </source>
</reference>
<reference key="2">
    <citation type="journal article" date="2004" name="Genome Res.">
        <title>The status, quality, and expansion of the NIH full-length cDNA project: the Mammalian Gene Collection (MGC).</title>
        <authorList>
            <consortium name="The MGC Project Team"/>
        </authorList>
    </citation>
    <scope>NUCLEOTIDE SEQUENCE [LARGE SCALE MRNA] (ISOFORMS 1 AND 2)</scope>
    <source>
        <tissue>Mammary tumor</tissue>
    </source>
</reference>
<reference key="3">
    <citation type="journal article" date="2006" name="Genes Dev.">
        <title>Proteolysis of MLL family proteins is essential for taspase1-orchestrated cell cycle progression.</title>
        <authorList>
            <person name="Takeda S."/>
            <person name="Chen D.Y."/>
            <person name="Westergard T.D."/>
            <person name="Fisher J.K."/>
            <person name="Rubens J.A."/>
            <person name="Sasagawa S."/>
            <person name="Kan J.T."/>
            <person name="Korsmeyer S.J."/>
            <person name="Cheng E.H."/>
            <person name="Hsieh J.J."/>
        </authorList>
    </citation>
    <scope>FUNCTION</scope>
    <scope>DISRUPTION PHENOTYPE</scope>
</reference>
<name>TASP1_MOUSE</name>
<protein>
    <recommendedName>
        <fullName>Threonine aspartase 1</fullName>
        <shortName>Taspase-1</shortName>
        <ecNumber>3.4.25.-</ecNumber>
    </recommendedName>
    <component>
        <recommendedName>
            <fullName>Threonine aspartase subunit alpha</fullName>
        </recommendedName>
    </component>
    <component>
        <recommendedName>
            <fullName>Threonine aspartase subunit beta</fullName>
        </recommendedName>
    </component>
</protein>
<proteinExistence type="evidence at transcript level"/>
<evidence type="ECO:0000250" key="1"/>
<evidence type="ECO:0000250" key="2">
    <source>
        <dbReference type="UniProtKB" id="Q9H6P5"/>
    </source>
</evidence>
<evidence type="ECO:0000256" key="3">
    <source>
        <dbReference type="SAM" id="MobiDB-lite"/>
    </source>
</evidence>
<evidence type="ECO:0000269" key="4">
    <source>
    </source>
</evidence>
<evidence type="ECO:0000303" key="5">
    <source>
    </source>
</evidence>
<evidence type="ECO:0000305" key="6"/>